<name>RS5A_DROME</name>
<dbReference type="EMBL" id="U48394">
    <property type="protein sequence ID" value="AAB61633.1"/>
    <property type="molecule type" value="mRNA"/>
</dbReference>
<dbReference type="EMBL" id="AE014298">
    <property type="protein sequence ID" value="AAF48700.1"/>
    <property type="molecule type" value="Genomic_DNA"/>
</dbReference>
<dbReference type="EMBL" id="AY075368">
    <property type="protein sequence ID" value="AAL68215.1"/>
    <property type="molecule type" value="mRNA"/>
</dbReference>
<dbReference type="RefSeq" id="NP_001285360.1">
    <property type="nucleotide sequence ID" value="NM_001298431.1"/>
</dbReference>
<dbReference type="RefSeq" id="NP_001285361.1">
    <property type="nucleotide sequence ID" value="NM_001298432.1"/>
</dbReference>
<dbReference type="RefSeq" id="NP_001285362.1">
    <property type="nucleotide sequence ID" value="NM_001298433.1"/>
</dbReference>
<dbReference type="RefSeq" id="NP_523382.1">
    <property type="nucleotide sequence ID" value="NM_078658.3"/>
</dbReference>
<dbReference type="PDB" id="4V6W">
    <property type="method" value="EM"/>
    <property type="resolution" value="6.00 A"/>
    <property type="chains" value="AF=1-228"/>
</dbReference>
<dbReference type="PDB" id="6XU6">
    <property type="method" value="EM"/>
    <property type="resolution" value="3.50 A"/>
    <property type="chains" value="AF=40-228"/>
</dbReference>
<dbReference type="PDB" id="6XU7">
    <property type="method" value="EM"/>
    <property type="resolution" value="4.90 A"/>
    <property type="chains" value="AF=40-228"/>
</dbReference>
<dbReference type="PDBsum" id="4V6W"/>
<dbReference type="PDBsum" id="6XU6"/>
<dbReference type="PDBsum" id="6XU7"/>
<dbReference type="EMDB" id="EMD-10622"/>
<dbReference type="EMDB" id="EMD-10623"/>
<dbReference type="SMR" id="Q24186"/>
<dbReference type="BioGRID" id="59029">
    <property type="interactions" value="116"/>
</dbReference>
<dbReference type="DIP" id="DIP-18111N"/>
<dbReference type="FunCoup" id="Q24186">
    <property type="interactions" value="1500"/>
</dbReference>
<dbReference type="IntAct" id="Q24186">
    <property type="interactions" value="4"/>
</dbReference>
<dbReference type="STRING" id="7227.FBpp0309958"/>
<dbReference type="PaxDb" id="7227-FBpp0074180"/>
<dbReference type="DNASU" id="32700"/>
<dbReference type="EnsemblMetazoa" id="FBtr0074406">
    <property type="protein sequence ID" value="FBpp0074180"/>
    <property type="gene ID" value="FBgn0002590"/>
</dbReference>
<dbReference type="EnsemblMetazoa" id="FBtr0343292">
    <property type="protein sequence ID" value="FBpp0309957"/>
    <property type="gene ID" value="FBgn0002590"/>
</dbReference>
<dbReference type="EnsemblMetazoa" id="FBtr0343293">
    <property type="protein sequence ID" value="FBpp0309958"/>
    <property type="gene ID" value="FBgn0002590"/>
</dbReference>
<dbReference type="EnsemblMetazoa" id="FBtr0345132">
    <property type="protein sequence ID" value="FBpp0311353"/>
    <property type="gene ID" value="FBgn0002590"/>
</dbReference>
<dbReference type="GeneID" id="32700"/>
<dbReference type="KEGG" id="dme:Dmel_CG8922"/>
<dbReference type="AGR" id="FB:FBgn0002590"/>
<dbReference type="CTD" id="32700"/>
<dbReference type="FlyBase" id="FBgn0002590">
    <property type="gene designation" value="RpS5a"/>
</dbReference>
<dbReference type="VEuPathDB" id="VectorBase:FBgn0002590"/>
<dbReference type="eggNOG" id="KOG3291">
    <property type="taxonomic scope" value="Eukaryota"/>
</dbReference>
<dbReference type="HOGENOM" id="CLU_063975_0_0_1"/>
<dbReference type="InParanoid" id="Q24186"/>
<dbReference type="OMA" id="AMKHATY"/>
<dbReference type="OrthoDB" id="10264639at2759"/>
<dbReference type="PhylomeDB" id="Q24186"/>
<dbReference type="Reactome" id="R-DME-156827">
    <property type="pathway name" value="L13a-mediated translational silencing of Ceruloplasmin expression"/>
</dbReference>
<dbReference type="Reactome" id="R-DME-1799339">
    <property type="pathway name" value="SRP-dependent cotranslational protein targeting to membrane"/>
</dbReference>
<dbReference type="Reactome" id="R-DME-72649">
    <property type="pathway name" value="Translation initiation complex formation"/>
</dbReference>
<dbReference type="Reactome" id="R-DME-72689">
    <property type="pathway name" value="Formation of a pool of free 40S subunits"/>
</dbReference>
<dbReference type="Reactome" id="R-DME-72695">
    <property type="pathway name" value="Formation of the ternary complex, and subsequently, the 43S complex"/>
</dbReference>
<dbReference type="Reactome" id="R-DME-72702">
    <property type="pathway name" value="Ribosomal scanning and start codon recognition"/>
</dbReference>
<dbReference type="Reactome" id="R-DME-72706">
    <property type="pathway name" value="GTP hydrolysis and joining of the 60S ribosomal subunit"/>
</dbReference>
<dbReference type="Reactome" id="R-DME-975956">
    <property type="pathway name" value="Nonsense Mediated Decay (NMD) independent of the Exon Junction Complex (EJC)"/>
</dbReference>
<dbReference type="Reactome" id="R-DME-975957">
    <property type="pathway name" value="Nonsense Mediated Decay (NMD) enhanced by the Exon Junction Complex (EJC)"/>
</dbReference>
<dbReference type="SignaLink" id="Q24186"/>
<dbReference type="BioGRID-ORCS" id="32700">
    <property type="hits" value="1 hit in 1 CRISPR screen"/>
</dbReference>
<dbReference type="ChiTaRS" id="RpS5a">
    <property type="organism name" value="fly"/>
</dbReference>
<dbReference type="GenomeRNAi" id="32700"/>
<dbReference type="PRO" id="PR:Q24186"/>
<dbReference type="Proteomes" id="UP000000803">
    <property type="component" value="Chromosome X"/>
</dbReference>
<dbReference type="Bgee" id="FBgn0002590">
    <property type="expression patterns" value="Expressed in eye disc (Drosophila) and 278 other cell types or tissues"/>
</dbReference>
<dbReference type="ExpressionAtlas" id="Q24186">
    <property type="expression patterns" value="baseline and differential"/>
</dbReference>
<dbReference type="GO" id="GO:0005737">
    <property type="term" value="C:cytoplasm"/>
    <property type="evidence" value="ECO:0000314"/>
    <property type="project" value="FlyBase"/>
</dbReference>
<dbReference type="GO" id="GO:0022626">
    <property type="term" value="C:cytosolic ribosome"/>
    <property type="evidence" value="ECO:0000314"/>
    <property type="project" value="FlyBase"/>
</dbReference>
<dbReference type="GO" id="GO:0022627">
    <property type="term" value="C:cytosolic small ribosomal subunit"/>
    <property type="evidence" value="ECO:0000318"/>
    <property type="project" value="GO_Central"/>
</dbReference>
<dbReference type="GO" id="GO:0005730">
    <property type="term" value="C:nucleolus"/>
    <property type="evidence" value="ECO:0000314"/>
    <property type="project" value="FlyBase"/>
</dbReference>
<dbReference type="GO" id="GO:0005840">
    <property type="term" value="C:ribosome"/>
    <property type="evidence" value="ECO:0000318"/>
    <property type="project" value="GO_Central"/>
</dbReference>
<dbReference type="GO" id="GO:0003729">
    <property type="term" value="F:mRNA binding"/>
    <property type="evidence" value="ECO:0000318"/>
    <property type="project" value="GO_Central"/>
</dbReference>
<dbReference type="GO" id="GO:0019843">
    <property type="term" value="F:rRNA binding"/>
    <property type="evidence" value="ECO:0000318"/>
    <property type="project" value="GO_Central"/>
</dbReference>
<dbReference type="GO" id="GO:0003735">
    <property type="term" value="F:structural constituent of ribosome"/>
    <property type="evidence" value="ECO:0000314"/>
    <property type="project" value="FlyBase"/>
</dbReference>
<dbReference type="GO" id="GO:0002181">
    <property type="term" value="P:cytoplasmic translation"/>
    <property type="evidence" value="ECO:0000304"/>
    <property type="project" value="FlyBase"/>
</dbReference>
<dbReference type="GO" id="GO:0000028">
    <property type="term" value="P:ribosomal small subunit assembly"/>
    <property type="evidence" value="ECO:0000318"/>
    <property type="project" value="GO_Central"/>
</dbReference>
<dbReference type="GO" id="GO:0006412">
    <property type="term" value="P:translation"/>
    <property type="evidence" value="ECO:0000318"/>
    <property type="project" value="GO_Central"/>
</dbReference>
<dbReference type="CDD" id="cd14867">
    <property type="entry name" value="uS7_Eukaryote"/>
    <property type="match status" value="1"/>
</dbReference>
<dbReference type="FunFam" id="1.10.455.10:FF:000003">
    <property type="entry name" value="40S ribosomal protein S5"/>
    <property type="match status" value="1"/>
</dbReference>
<dbReference type="Gene3D" id="1.10.455.10">
    <property type="entry name" value="Ribosomal protein S7 domain"/>
    <property type="match status" value="1"/>
</dbReference>
<dbReference type="InterPro" id="IPR000235">
    <property type="entry name" value="Ribosomal_uS7"/>
</dbReference>
<dbReference type="InterPro" id="IPR020606">
    <property type="entry name" value="Ribosomal_uS7_CS"/>
</dbReference>
<dbReference type="InterPro" id="IPR023798">
    <property type="entry name" value="Ribosomal_uS7_dom"/>
</dbReference>
<dbReference type="InterPro" id="IPR036823">
    <property type="entry name" value="Ribosomal_uS7_dom_sf"/>
</dbReference>
<dbReference type="InterPro" id="IPR005716">
    <property type="entry name" value="Ribosomal_uS7_euk/arc"/>
</dbReference>
<dbReference type="NCBIfam" id="NF003106">
    <property type="entry name" value="PRK04027.1"/>
    <property type="match status" value="1"/>
</dbReference>
<dbReference type="NCBIfam" id="TIGR01028">
    <property type="entry name" value="uS7_euk_arch"/>
    <property type="match status" value="1"/>
</dbReference>
<dbReference type="PANTHER" id="PTHR11205">
    <property type="entry name" value="RIBOSOMAL PROTEIN S7"/>
    <property type="match status" value="1"/>
</dbReference>
<dbReference type="Pfam" id="PF00177">
    <property type="entry name" value="Ribosomal_S7"/>
    <property type="match status" value="1"/>
</dbReference>
<dbReference type="PIRSF" id="PIRSF002122">
    <property type="entry name" value="RPS7p_RPS7a_RPS5e_RPS7o"/>
    <property type="match status" value="1"/>
</dbReference>
<dbReference type="SUPFAM" id="SSF47973">
    <property type="entry name" value="Ribosomal protein S7"/>
    <property type="match status" value="1"/>
</dbReference>
<dbReference type="PROSITE" id="PS00052">
    <property type="entry name" value="RIBOSOMAL_S7"/>
    <property type="match status" value="1"/>
</dbReference>
<reference key="1">
    <citation type="journal article" date="1996" name="Genetics">
        <title>Cloning of the Drosophila melanogaster meiotic recombination gene mei-218: a genetic and molecular analysis of interval 15E.</title>
        <authorList>
            <person name="McKim K.S."/>
            <person name="Dahmus J."/>
            <person name="Hawley R.S."/>
        </authorList>
    </citation>
    <scope>NUCLEOTIDE SEQUENCE [MRNA]</scope>
</reference>
<reference key="2">
    <citation type="journal article" date="2000" name="Science">
        <title>The genome sequence of Drosophila melanogaster.</title>
        <authorList>
            <person name="Adams M.D."/>
            <person name="Celniker S.E."/>
            <person name="Holt R.A."/>
            <person name="Evans C.A."/>
            <person name="Gocayne J.D."/>
            <person name="Amanatides P.G."/>
            <person name="Scherer S.E."/>
            <person name="Li P.W."/>
            <person name="Hoskins R.A."/>
            <person name="Galle R.F."/>
            <person name="George R.A."/>
            <person name="Lewis S.E."/>
            <person name="Richards S."/>
            <person name="Ashburner M."/>
            <person name="Henderson S.N."/>
            <person name="Sutton G.G."/>
            <person name="Wortman J.R."/>
            <person name="Yandell M.D."/>
            <person name="Zhang Q."/>
            <person name="Chen L.X."/>
            <person name="Brandon R.C."/>
            <person name="Rogers Y.-H.C."/>
            <person name="Blazej R.G."/>
            <person name="Champe M."/>
            <person name="Pfeiffer B.D."/>
            <person name="Wan K.H."/>
            <person name="Doyle C."/>
            <person name="Baxter E.G."/>
            <person name="Helt G."/>
            <person name="Nelson C.R."/>
            <person name="Miklos G.L.G."/>
            <person name="Abril J.F."/>
            <person name="Agbayani A."/>
            <person name="An H.-J."/>
            <person name="Andrews-Pfannkoch C."/>
            <person name="Baldwin D."/>
            <person name="Ballew R.M."/>
            <person name="Basu A."/>
            <person name="Baxendale J."/>
            <person name="Bayraktaroglu L."/>
            <person name="Beasley E.M."/>
            <person name="Beeson K.Y."/>
            <person name="Benos P.V."/>
            <person name="Berman B.P."/>
            <person name="Bhandari D."/>
            <person name="Bolshakov S."/>
            <person name="Borkova D."/>
            <person name="Botchan M.R."/>
            <person name="Bouck J."/>
            <person name="Brokstein P."/>
            <person name="Brottier P."/>
            <person name="Burtis K.C."/>
            <person name="Busam D.A."/>
            <person name="Butler H."/>
            <person name="Cadieu E."/>
            <person name="Center A."/>
            <person name="Chandra I."/>
            <person name="Cherry J.M."/>
            <person name="Cawley S."/>
            <person name="Dahlke C."/>
            <person name="Davenport L.B."/>
            <person name="Davies P."/>
            <person name="de Pablos B."/>
            <person name="Delcher A."/>
            <person name="Deng Z."/>
            <person name="Mays A.D."/>
            <person name="Dew I."/>
            <person name="Dietz S.M."/>
            <person name="Dodson K."/>
            <person name="Doup L.E."/>
            <person name="Downes M."/>
            <person name="Dugan-Rocha S."/>
            <person name="Dunkov B.C."/>
            <person name="Dunn P."/>
            <person name="Durbin K.J."/>
            <person name="Evangelista C.C."/>
            <person name="Ferraz C."/>
            <person name="Ferriera S."/>
            <person name="Fleischmann W."/>
            <person name="Fosler C."/>
            <person name="Gabrielian A.E."/>
            <person name="Garg N.S."/>
            <person name="Gelbart W.M."/>
            <person name="Glasser K."/>
            <person name="Glodek A."/>
            <person name="Gong F."/>
            <person name="Gorrell J.H."/>
            <person name="Gu Z."/>
            <person name="Guan P."/>
            <person name="Harris M."/>
            <person name="Harris N.L."/>
            <person name="Harvey D.A."/>
            <person name="Heiman T.J."/>
            <person name="Hernandez J.R."/>
            <person name="Houck J."/>
            <person name="Hostin D."/>
            <person name="Houston K.A."/>
            <person name="Howland T.J."/>
            <person name="Wei M.-H."/>
            <person name="Ibegwam C."/>
            <person name="Jalali M."/>
            <person name="Kalush F."/>
            <person name="Karpen G.H."/>
            <person name="Ke Z."/>
            <person name="Kennison J.A."/>
            <person name="Ketchum K.A."/>
            <person name="Kimmel B.E."/>
            <person name="Kodira C.D."/>
            <person name="Kraft C.L."/>
            <person name="Kravitz S."/>
            <person name="Kulp D."/>
            <person name="Lai Z."/>
            <person name="Lasko P."/>
            <person name="Lei Y."/>
            <person name="Levitsky A.A."/>
            <person name="Li J.H."/>
            <person name="Li Z."/>
            <person name="Liang Y."/>
            <person name="Lin X."/>
            <person name="Liu X."/>
            <person name="Mattei B."/>
            <person name="McIntosh T.C."/>
            <person name="McLeod M.P."/>
            <person name="McPherson D."/>
            <person name="Merkulov G."/>
            <person name="Milshina N.V."/>
            <person name="Mobarry C."/>
            <person name="Morris J."/>
            <person name="Moshrefi A."/>
            <person name="Mount S.M."/>
            <person name="Moy M."/>
            <person name="Murphy B."/>
            <person name="Murphy L."/>
            <person name="Muzny D.M."/>
            <person name="Nelson D.L."/>
            <person name="Nelson D.R."/>
            <person name="Nelson K.A."/>
            <person name="Nixon K."/>
            <person name="Nusskern D.R."/>
            <person name="Pacleb J.M."/>
            <person name="Palazzolo M."/>
            <person name="Pittman G.S."/>
            <person name="Pan S."/>
            <person name="Pollard J."/>
            <person name="Puri V."/>
            <person name="Reese M.G."/>
            <person name="Reinert K."/>
            <person name="Remington K."/>
            <person name="Saunders R.D.C."/>
            <person name="Scheeler F."/>
            <person name="Shen H."/>
            <person name="Shue B.C."/>
            <person name="Siden-Kiamos I."/>
            <person name="Simpson M."/>
            <person name="Skupski M.P."/>
            <person name="Smith T.J."/>
            <person name="Spier E."/>
            <person name="Spradling A.C."/>
            <person name="Stapleton M."/>
            <person name="Strong R."/>
            <person name="Sun E."/>
            <person name="Svirskas R."/>
            <person name="Tector C."/>
            <person name="Turner R."/>
            <person name="Venter E."/>
            <person name="Wang A.H."/>
            <person name="Wang X."/>
            <person name="Wang Z.-Y."/>
            <person name="Wassarman D.A."/>
            <person name="Weinstock G.M."/>
            <person name="Weissenbach J."/>
            <person name="Williams S.M."/>
            <person name="Woodage T."/>
            <person name="Worley K.C."/>
            <person name="Wu D."/>
            <person name="Yang S."/>
            <person name="Yao Q.A."/>
            <person name="Ye J."/>
            <person name="Yeh R.-F."/>
            <person name="Zaveri J.S."/>
            <person name="Zhan M."/>
            <person name="Zhang G."/>
            <person name="Zhao Q."/>
            <person name="Zheng L."/>
            <person name="Zheng X.H."/>
            <person name="Zhong F.N."/>
            <person name="Zhong W."/>
            <person name="Zhou X."/>
            <person name="Zhu S.C."/>
            <person name="Zhu X."/>
            <person name="Smith H.O."/>
            <person name="Gibbs R.A."/>
            <person name="Myers E.W."/>
            <person name="Rubin G.M."/>
            <person name="Venter J.C."/>
        </authorList>
    </citation>
    <scope>NUCLEOTIDE SEQUENCE [LARGE SCALE GENOMIC DNA]</scope>
    <source>
        <strain>Berkeley</strain>
    </source>
</reference>
<reference key="3">
    <citation type="journal article" date="2002" name="Genome Biol.">
        <title>Annotation of the Drosophila melanogaster euchromatic genome: a systematic review.</title>
        <authorList>
            <person name="Misra S."/>
            <person name="Crosby M.A."/>
            <person name="Mungall C.J."/>
            <person name="Matthews B.B."/>
            <person name="Campbell K.S."/>
            <person name="Hradecky P."/>
            <person name="Huang Y."/>
            <person name="Kaminker J.S."/>
            <person name="Millburn G.H."/>
            <person name="Prochnik S.E."/>
            <person name="Smith C.D."/>
            <person name="Tupy J.L."/>
            <person name="Whitfield E.J."/>
            <person name="Bayraktaroglu L."/>
            <person name="Berman B.P."/>
            <person name="Bettencourt B.R."/>
            <person name="Celniker S.E."/>
            <person name="de Grey A.D.N.J."/>
            <person name="Drysdale R.A."/>
            <person name="Harris N.L."/>
            <person name="Richter J."/>
            <person name="Russo S."/>
            <person name="Schroeder A.J."/>
            <person name="Shu S.Q."/>
            <person name="Stapleton M."/>
            <person name="Yamada C."/>
            <person name="Ashburner M."/>
            <person name="Gelbart W.M."/>
            <person name="Rubin G.M."/>
            <person name="Lewis S.E."/>
        </authorList>
    </citation>
    <scope>GENOME REANNOTATION</scope>
    <source>
        <strain>Berkeley</strain>
    </source>
</reference>
<reference key="4">
    <citation type="journal article" date="2002" name="Genome Biol.">
        <title>A Drosophila full-length cDNA resource.</title>
        <authorList>
            <person name="Stapleton M."/>
            <person name="Carlson J.W."/>
            <person name="Brokstein P."/>
            <person name="Yu C."/>
            <person name="Champe M."/>
            <person name="George R.A."/>
            <person name="Guarin H."/>
            <person name="Kronmiller B."/>
            <person name="Pacleb J.M."/>
            <person name="Park S."/>
            <person name="Wan K.H."/>
            <person name="Rubin G.M."/>
            <person name="Celniker S.E."/>
        </authorList>
    </citation>
    <scope>NUCLEOTIDE SEQUENCE [LARGE SCALE MRNA]</scope>
    <source>
        <strain>Berkeley</strain>
        <tissue>Ovary</tissue>
    </source>
</reference>
<reference key="5">
    <citation type="journal article" date="2013" name="Nature">
        <title>Structures of the human and Drosophila 80S ribosome.</title>
        <authorList>
            <person name="Anger A.M."/>
            <person name="Armache J.P."/>
            <person name="Berninghausen O."/>
            <person name="Habeck M."/>
            <person name="Subklewe M."/>
            <person name="Wilson D.N."/>
            <person name="Beckmann R."/>
        </authorList>
    </citation>
    <scope>STRUCTURE BY ELECTRON MICROSCOPY (6.0 ANGSTROMS) OF THE 80S RIBOSOME</scope>
</reference>
<organism>
    <name type="scientific">Drosophila melanogaster</name>
    <name type="common">Fruit fly</name>
    <dbReference type="NCBI Taxonomy" id="7227"/>
    <lineage>
        <taxon>Eukaryota</taxon>
        <taxon>Metazoa</taxon>
        <taxon>Ecdysozoa</taxon>
        <taxon>Arthropoda</taxon>
        <taxon>Hexapoda</taxon>
        <taxon>Insecta</taxon>
        <taxon>Pterygota</taxon>
        <taxon>Neoptera</taxon>
        <taxon>Endopterygota</taxon>
        <taxon>Diptera</taxon>
        <taxon>Brachycera</taxon>
        <taxon>Muscomorpha</taxon>
        <taxon>Ephydroidea</taxon>
        <taxon>Drosophilidae</taxon>
        <taxon>Drosophila</taxon>
        <taxon>Sophophora</taxon>
    </lineage>
</organism>
<evidence type="ECO:0000305" key="1"/>
<proteinExistence type="evidence at protein level"/>
<comment type="similarity">
    <text evidence="1">Belongs to the universal ribosomal protein uS7 family.</text>
</comment>
<accession>Q24186</accession>
<accession>Q9VX78</accession>
<feature type="chain" id="PRO_0000124530" description="Small ribosomal subunit protein uS7A">
    <location>
        <begin position="1"/>
        <end position="228"/>
    </location>
</feature>
<gene>
    <name type="primary">RpS5a</name>
    <name type="synonym">M(1)15D</name>
    <name type="synonym">RpS5</name>
    <name type="ORF">CG8922</name>
</gene>
<sequence>MAEVAENVVETFEEPAAPMEAEVAETILETNVVSTTELPEIKLFGRWSCDDVTVNDISLQDYISVKEKFARYLPHSAGRYAAKRFRKAQCPIVERLTCSLMMKGRNNGKKLMACRIVKHSFEIIHLLTGENPLQILVSAIINSGPREDSTRIGRAGTVRRQAVDVSPLRRVNQAIWLLCTGAREAAFRNIKTIAECLADELINAAKGSSNSYAIKKKDELERVAKSNR</sequence>
<keyword id="KW-0002">3D-structure</keyword>
<keyword id="KW-1185">Reference proteome</keyword>
<keyword id="KW-0687">Ribonucleoprotein</keyword>
<keyword id="KW-0689">Ribosomal protein</keyword>
<protein>
    <recommendedName>
        <fullName evidence="1">Small ribosomal subunit protein uS7A</fullName>
    </recommendedName>
    <alternativeName>
        <fullName>40S ribosomal protein S5a</fullName>
    </alternativeName>
</protein>